<name>DBH_CAUVC</name>
<feature type="chain" id="PRO_0000104929" description="DNA-binding protein HU">
    <location>
        <begin position="1"/>
        <end position="92"/>
    </location>
</feature>
<feature type="region of interest" description="Disordered" evidence="2">
    <location>
        <begin position="58"/>
        <end position="92"/>
    </location>
</feature>
<dbReference type="EMBL" id="AE005673">
    <property type="protein sequence ID" value="AAK23934.1"/>
    <property type="molecule type" value="Genomic_DNA"/>
</dbReference>
<dbReference type="PIR" id="B87492">
    <property type="entry name" value="B87492"/>
</dbReference>
<dbReference type="RefSeq" id="NP_420766.1">
    <property type="nucleotide sequence ID" value="NC_002696.2"/>
</dbReference>
<dbReference type="RefSeq" id="WP_010919825.1">
    <property type="nucleotide sequence ID" value="NC_002696.2"/>
</dbReference>
<dbReference type="SMR" id="P0CAV2"/>
<dbReference type="STRING" id="190650.CC_1959"/>
<dbReference type="EnsemblBacteria" id="AAK23934">
    <property type="protein sequence ID" value="AAK23934"/>
    <property type="gene ID" value="CC_1959"/>
</dbReference>
<dbReference type="KEGG" id="ccr:CC_1959"/>
<dbReference type="PATRIC" id="fig|190650.5.peg.1975"/>
<dbReference type="eggNOG" id="COG0776">
    <property type="taxonomic scope" value="Bacteria"/>
</dbReference>
<dbReference type="HOGENOM" id="CLU_105066_3_3_5"/>
<dbReference type="BioCyc" id="CAULO:CC1959-MONOMER"/>
<dbReference type="Proteomes" id="UP000001816">
    <property type="component" value="Chromosome"/>
</dbReference>
<dbReference type="GO" id="GO:0005829">
    <property type="term" value="C:cytosol"/>
    <property type="evidence" value="ECO:0007669"/>
    <property type="project" value="TreeGrafter"/>
</dbReference>
<dbReference type="GO" id="GO:0003677">
    <property type="term" value="F:DNA binding"/>
    <property type="evidence" value="ECO:0007669"/>
    <property type="project" value="UniProtKB-KW"/>
</dbReference>
<dbReference type="GO" id="GO:0030527">
    <property type="term" value="F:structural constituent of chromatin"/>
    <property type="evidence" value="ECO:0007669"/>
    <property type="project" value="InterPro"/>
</dbReference>
<dbReference type="GO" id="GO:0030261">
    <property type="term" value="P:chromosome condensation"/>
    <property type="evidence" value="ECO:0007669"/>
    <property type="project" value="UniProtKB-KW"/>
</dbReference>
<dbReference type="CDD" id="cd13831">
    <property type="entry name" value="HU"/>
    <property type="match status" value="1"/>
</dbReference>
<dbReference type="Gene3D" id="4.10.520.10">
    <property type="entry name" value="IHF-like DNA-binding proteins"/>
    <property type="match status" value="1"/>
</dbReference>
<dbReference type="InterPro" id="IPR000119">
    <property type="entry name" value="Hist_DNA-bd"/>
</dbReference>
<dbReference type="InterPro" id="IPR010992">
    <property type="entry name" value="IHF-like_DNA-bd_dom_sf"/>
</dbReference>
<dbReference type="PANTHER" id="PTHR33175">
    <property type="entry name" value="DNA-BINDING PROTEIN HU"/>
    <property type="match status" value="1"/>
</dbReference>
<dbReference type="PANTHER" id="PTHR33175:SF3">
    <property type="entry name" value="DNA-BINDING PROTEIN HU-BETA"/>
    <property type="match status" value="1"/>
</dbReference>
<dbReference type="Pfam" id="PF00216">
    <property type="entry name" value="Bac_DNA_binding"/>
    <property type="match status" value="1"/>
</dbReference>
<dbReference type="PRINTS" id="PR01727">
    <property type="entry name" value="DNABINDINGHU"/>
</dbReference>
<dbReference type="SMART" id="SM00411">
    <property type="entry name" value="BHL"/>
    <property type="match status" value="1"/>
</dbReference>
<dbReference type="SUPFAM" id="SSF47729">
    <property type="entry name" value="IHF-like DNA-binding proteins"/>
    <property type="match status" value="1"/>
</dbReference>
<proteinExistence type="inferred from homology"/>
<comment type="function">
    <text evidence="1">Histone-like DNA-binding protein which is capable of wrapping DNA to stabilize it, and thus to prevent its denaturation under extreme environmental conditions.</text>
</comment>
<comment type="subunit">
    <text evidence="1">Homodimer.</text>
</comment>
<comment type="similarity">
    <text evidence="3">Belongs to the bacterial histone-like protein family.</text>
</comment>
<gene>
    <name type="primary">hup</name>
    <name type="ordered locus">CC_1959</name>
</gene>
<keyword id="KW-0226">DNA condensation</keyword>
<keyword id="KW-0238">DNA-binding</keyword>
<keyword id="KW-1185">Reference proteome</keyword>
<accession>P0CAV2</accession>
<accession>O87475</accession>
<reference key="1">
    <citation type="journal article" date="2001" name="Proc. Natl. Acad. Sci. U.S.A.">
        <title>Complete genome sequence of Caulobacter crescentus.</title>
        <authorList>
            <person name="Nierman W.C."/>
            <person name="Feldblyum T.V."/>
            <person name="Laub M.T."/>
            <person name="Paulsen I.T."/>
            <person name="Nelson K.E."/>
            <person name="Eisen J.A."/>
            <person name="Heidelberg J.F."/>
            <person name="Alley M.R.K."/>
            <person name="Ohta N."/>
            <person name="Maddock J.R."/>
            <person name="Potocka I."/>
            <person name="Nelson W.C."/>
            <person name="Newton A."/>
            <person name="Stephens C."/>
            <person name="Phadke N.D."/>
            <person name="Ely B."/>
            <person name="DeBoy R.T."/>
            <person name="Dodson R.J."/>
            <person name="Durkin A.S."/>
            <person name="Gwinn M.L."/>
            <person name="Haft D.H."/>
            <person name="Kolonay J.F."/>
            <person name="Smit J."/>
            <person name="Craven M.B."/>
            <person name="Khouri H.M."/>
            <person name="Shetty J."/>
            <person name="Berry K.J."/>
            <person name="Utterback T.R."/>
            <person name="Tran K."/>
            <person name="Wolf A.M."/>
            <person name="Vamathevan J.J."/>
            <person name="Ermolaeva M.D."/>
            <person name="White O."/>
            <person name="Salzberg S.L."/>
            <person name="Venter J.C."/>
            <person name="Shapiro L."/>
            <person name="Fraser C.M."/>
        </authorList>
    </citation>
    <scope>NUCLEOTIDE SEQUENCE [LARGE SCALE GENOMIC DNA]</scope>
    <source>
        <strain>ATCC 19089 / CIP 103742 / CB 15</strain>
    </source>
</reference>
<protein>
    <recommendedName>
        <fullName>DNA-binding protein HU</fullName>
    </recommendedName>
</protein>
<sequence length="92" mass="9667">MTTKAELVTAIAEKAGINKNQAKDALEAFIEAVTDSLKSGQDVRLVGFGTFKAVTRAAGTARNPRTGETVNRPASKTARFQVGEGLKSSLNS</sequence>
<organism>
    <name type="scientific">Caulobacter vibrioides (strain ATCC 19089 / CIP 103742 / CB 15)</name>
    <name type="common">Caulobacter crescentus</name>
    <dbReference type="NCBI Taxonomy" id="190650"/>
    <lineage>
        <taxon>Bacteria</taxon>
        <taxon>Pseudomonadati</taxon>
        <taxon>Pseudomonadota</taxon>
        <taxon>Alphaproteobacteria</taxon>
        <taxon>Caulobacterales</taxon>
        <taxon>Caulobacteraceae</taxon>
        <taxon>Caulobacter</taxon>
    </lineage>
</organism>
<evidence type="ECO:0000250" key="1"/>
<evidence type="ECO:0000256" key="2">
    <source>
        <dbReference type="SAM" id="MobiDB-lite"/>
    </source>
</evidence>
<evidence type="ECO:0000305" key="3"/>